<accession>Q8D3I0</accession>
<reference key="1">
    <citation type="journal article" date="2002" name="Nat. Genet.">
        <title>Genome sequence of the endocellular obligate symbiont of tsetse flies, Wigglesworthia glossinidia.</title>
        <authorList>
            <person name="Akman L."/>
            <person name="Yamashita A."/>
            <person name="Watanabe H."/>
            <person name="Oshima K."/>
            <person name="Shiba T."/>
            <person name="Hattori M."/>
            <person name="Aksoy S."/>
        </authorList>
    </citation>
    <scope>NUCLEOTIDE SEQUENCE [LARGE SCALE GENOMIC DNA]</scope>
</reference>
<gene>
    <name evidence="1" type="primary">apaH</name>
    <name type="ordered locus">WIGBR0210</name>
</gene>
<keyword id="KW-0378">Hydrolase</keyword>
<keyword id="KW-1185">Reference proteome</keyword>
<name>APAH_WIGBR</name>
<feature type="chain" id="PRO_0000198016" description="Bis(5'-nucleosyl)-tetraphosphatase, symmetrical">
    <location>
        <begin position="1"/>
        <end position="272"/>
    </location>
</feature>
<protein>
    <recommendedName>
        <fullName evidence="1">Bis(5'-nucleosyl)-tetraphosphatase, symmetrical</fullName>
        <ecNumber evidence="1">3.6.1.41</ecNumber>
    </recommendedName>
    <alternativeName>
        <fullName evidence="1">Ap4A hydrolase</fullName>
    </alternativeName>
    <alternativeName>
        <fullName evidence="1">Diadenosine 5',5'''-P1,P4-tetraphosphate pyrophosphohydrolase</fullName>
    </alternativeName>
    <alternativeName>
        <fullName evidence="1">Diadenosine tetraphosphatase</fullName>
    </alternativeName>
</protein>
<dbReference type="EC" id="3.6.1.41" evidence="1"/>
<dbReference type="EMBL" id="BA000021">
    <property type="protein sequence ID" value="BAC24167.1"/>
    <property type="molecule type" value="Genomic_DNA"/>
</dbReference>
<dbReference type="SMR" id="Q8D3I0"/>
<dbReference type="STRING" id="36870.gene:10368499"/>
<dbReference type="KEGG" id="wbr:apaH"/>
<dbReference type="eggNOG" id="COG0639">
    <property type="taxonomic scope" value="Bacteria"/>
</dbReference>
<dbReference type="HOGENOM" id="CLU_056184_2_0_6"/>
<dbReference type="OrthoDB" id="9807890at2"/>
<dbReference type="Proteomes" id="UP000000562">
    <property type="component" value="Chromosome"/>
</dbReference>
<dbReference type="GO" id="GO:0008803">
    <property type="term" value="F:bis(5'-nucleosyl)-tetraphosphatase (symmetrical) activity"/>
    <property type="evidence" value="ECO:0007669"/>
    <property type="project" value="UniProtKB-UniRule"/>
</dbReference>
<dbReference type="CDD" id="cd07422">
    <property type="entry name" value="MPP_ApaH"/>
    <property type="match status" value="1"/>
</dbReference>
<dbReference type="Gene3D" id="3.60.21.10">
    <property type="match status" value="1"/>
</dbReference>
<dbReference type="HAMAP" id="MF_00199">
    <property type="entry name" value="ApaH"/>
    <property type="match status" value="1"/>
</dbReference>
<dbReference type="InterPro" id="IPR004617">
    <property type="entry name" value="ApaH"/>
</dbReference>
<dbReference type="InterPro" id="IPR004843">
    <property type="entry name" value="Calcineurin-like_PHP_ApaH"/>
</dbReference>
<dbReference type="InterPro" id="IPR029052">
    <property type="entry name" value="Metallo-depent_PP-like"/>
</dbReference>
<dbReference type="NCBIfam" id="TIGR00668">
    <property type="entry name" value="apaH"/>
    <property type="match status" value="1"/>
</dbReference>
<dbReference type="NCBIfam" id="NF001204">
    <property type="entry name" value="PRK00166.1"/>
    <property type="match status" value="1"/>
</dbReference>
<dbReference type="PANTHER" id="PTHR40942">
    <property type="match status" value="1"/>
</dbReference>
<dbReference type="PANTHER" id="PTHR40942:SF4">
    <property type="entry name" value="CYTOCHROME C5"/>
    <property type="match status" value="1"/>
</dbReference>
<dbReference type="Pfam" id="PF00149">
    <property type="entry name" value="Metallophos"/>
    <property type="match status" value="1"/>
</dbReference>
<dbReference type="PIRSF" id="PIRSF000903">
    <property type="entry name" value="B5n-ttraPtase_sm"/>
    <property type="match status" value="1"/>
</dbReference>
<dbReference type="SUPFAM" id="SSF56300">
    <property type="entry name" value="Metallo-dependent phosphatases"/>
    <property type="match status" value="1"/>
</dbReference>
<evidence type="ECO:0000255" key="1">
    <source>
        <dbReference type="HAMAP-Rule" id="MF_00199"/>
    </source>
</evidence>
<sequence length="272" mass="32246">MSHYLIGDIHGCYSEFKSMLDLINFNLKNDIIWIAGDFIGRGPDSLKVLRLIYKLKRNIFVVLGNHEINLLLLYAKIKKIKEEDKLTEILNAPDLKILISWLRKQPLLKIDKQKKIIMIHAGIIPKWDMSDLITNSKKVECELKSKNYKKFLKFMYIKNNEHKNIWKNNLPEIIKMRLTLNIITRIRYCISETEIDLLHKEHPEKSPNHLIPWFKFKNNITKNYSIVFGHWSSIKDYKTPKNIYGLDTGCCWKGELTALKWDNKLFFKIKSK</sequence>
<comment type="function">
    <text evidence="1">Hydrolyzes diadenosine 5',5'''-P1,P4-tetraphosphate to yield ADP.</text>
</comment>
<comment type="catalytic activity">
    <reaction evidence="1">
        <text>P(1),P(4)-bis(5'-adenosyl) tetraphosphate + H2O = 2 ADP + 2 H(+)</text>
        <dbReference type="Rhea" id="RHEA:24252"/>
        <dbReference type="ChEBI" id="CHEBI:15377"/>
        <dbReference type="ChEBI" id="CHEBI:15378"/>
        <dbReference type="ChEBI" id="CHEBI:58141"/>
        <dbReference type="ChEBI" id="CHEBI:456216"/>
        <dbReference type="EC" id="3.6.1.41"/>
    </reaction>
</comment>
<comment type="similarity">
    <text evidence="1">Belongs to the Ap4A hydrolase family.</text>
</comment>
<proteinExistence type="inferred from homology"/>
<organism>
    <name type="scientific">Wigglesworthia glossinidia brevipalpis</name>
    <dbReference type="NCBI Taxonomy" id="36870"/>
    <lineage>
        <taxon>Bacteria</taxon>
        <taxon>Pseudomonadati</taxon>
        <taxon>Pseudomonadota</taxon>
        <taxon>Gammaproteobacteria</taxon>
        <taxon>Enterobacterales</taxon>
        <taxon>Erwiniaceae</taxon>
        <taxon>Wigglesworthia</taxon>
    </lineage>
</organism>